<protein>
    <recommendedName>
        <fullName evidence="8">Beta-1,2-xylosyltransferase</fullName>
        <shortName evidence="9">AtXYLT</shortName>
        <ecNumber evidence="2 7">2.4.2.38</ecNumber>
    </recommendedName>
</protein>
<name>XYLT_ARATH</name>
<feature type="chain" id="PRO_0000080576" description="Beta-1,2-xylosyltransferase">
    <location>
        <begin position="1"/>
        <end position="534"/>
    </location>
</feature>
<feature type="topological domain" description="Cytoplasmic" evidence="1">
    <location>
        <begin position="1"/>
        <end position="11"/>
    </location>
</feature>
<feature type="transmembrane region" description="Helical; Signal-anchor for type II membrane protein" evidence="1">
    <location>
        <begin position="12"/>
        <end position="34"/>
    </location>
</feature>
<feature type="topological domain" description="Lumenal" evidence="1">
    <location>
        <begin position="35"/>
        <end position="534"/>
    </location>
</feature>
<feature type="glycosylation site" description="N-linked (GlcNAc...) asparagine" evidence="1 4 6">
    <location>
        <position position="51"/>
    </location>
</feature>
<feature type="glycosylation site" description="N-linked (GlcNAc...) asparagine" evidence="1 4 6">
    <location>
        <position position="301"/>
    </location>
</feature>
<feature type="glycosylation site" description="N-linked (GlcNAc...) asparagine" evidence="1 6">
    <location>
        <position position="479"/>
    </location>
</feature>
<feature type="mutagenesis site" description="Abolishes stability and activity; when associated with A-303." evidence="4">
    <original>S</original>
    <variation>A</variation>
    <location>
        <position position="53"/>
    </location>
</feature>
<feature type="mutagenesis site" description="Abolishes stability and activity; when associated with A-53." evidence="4">
    <original>T</original>
    <variation>A</variation>
    <location>
        <position position="303"/>
    </location>
</feature>
<feature type="sequence conflict" description="In Ref. 3; AAF77064." evidence="10" ref="3">
    <original>A</original>
    <variation>S</variation>
    <location>
        <position position="54"/>
    </location>
</feature>
<feature type="sequence conflict" description="In Ref. 3; AAF77064." evidence="10" ref="3">
    <original>N</original>
    <variation>S</variation>
    <location>
        <position position="125"/>
    </location>
</feature>
<feature type="sequence conflict" description="In Ref. 3; AAF77064." evidence="10" ref="3">
    <location>
        <position position="383"/>
    </location>
</feature>
<proteinExistence type="evidence at protein level"/>
<dbReference type="EC" id="2.4.2.38" evidence="2 7"/>
<dbReference type="EMBL" id="AJ272121">
    <property type="protein sequence ID" value="CAB90610.1"/>
    <property type="molecule type" value="mRNA"/>
</dbReference>
<dbReference type="EMBL" id="AJ277603">
    <property type="protein sequence ID" value="CAB89489.1"/>
    <property type="molecule type" value="mRNA"/>
</dbReference>
<dbReference type="EMBL" id="AF272852">
    <property type="protein sequence ID" value="AAF77064.1"/>
    <property type="molecule type" value="mRNA"/>
</dbReference>
<dbReference type="EMBL" id="AB015479">
    <property type="protein sequence ID" value="BAB08567.1"/>
    <property type="molecule type" value="Genomic_DNA"/>
</dbReference>
<dbReference type="EMBL" id="CP002688">
    <property type="protein sequence ID" value="AED96635.1"/>
    <property type="molecule type" value="Genomic_DNA"/>
</dbReference>
<dbReference type="EMBL" id="AF411785">
    <property type="protein sequence ID" value="AAL06475.1"/>
    <property type="molecule type" value="mRNA"/>
</dbReference>
<dbReference type="EMBL" id="AY143907">
    <property type="protein sequence ID" value="AAN28846.1"/>
    <property type="molecule type" value="mRNA"/>
</dbReference>
<dbReference type="PIR" id="T52649">
    <property type="entry name" value="T52649"/>
</dbReference>
<dbReference type="RefSeq" id="NP_568825.1">
    <property type="nucleotide sequence ID" value="NM_124932.4"/>
</dbReference>
<dbReference type="BioGRID" id="20887">
    <property type="interactions" value="2"/>
</dbReference>
<dbReference type="FunCoup" id="Q9LDH0">
    <property type="interactions" value="1569"/>
</dbReference>
<dbReference type="STRING" id="3702.Q9LDH0"/>
<dbReference type="CAZy" id="GT61">
    <property type="family name" value="Glycosyltransferase Family 61"/>
</dbReference>
<dbReference type="GlyCosmos" id="Q9LDH0">
    <property type="glycosylation" value="3 sites, No reported glycans"/>
</dbReference>
<dbReference type="GlyGen" id="Q9LDH0">
    <property type="glycosylation" value="3 sites"/>
</dbReference>
<dbReference type="iPTMnet" id="Q9LDH0"/>
<dbReference type="PaxDb" id="3702-AT5G55500.1"/>
<dbReference type="ProteomicsDB" id="242556"/>
<dbReference type="EnsemblPlants" id="AT5G55500.1">
    <property type="protein sequence ID" value="AT5G55500.1"/>
    <property type="gene ID" value="AT5G55500"/>
</dbReference>
<dbReference type="GeneID" id="835643"/>
<dbReference type="Gramene" id="AT5G55500.1">
    <property type="protein sequence ID" value="AT5G55500.1"/>
    <property type="gene ID" value="AT5G55500"/>
</dbReference>
<dbReference type="KEGG" id="ath:AT5G55500"/>
<dbReference type="Araport" id="AT5G55500"/>
<dbReference type="TAIR" id="AT5G55500">
    <property type="gene designation" value="XYLT"/>
</dbReference>
<dbReference type="eggNOG" id="KOG4698">
    <property type="taxonomic scope" value="Eukaryota"/>
</dbReference>
<dbReference type="HOGENOM" id="CLU_026674_0_0_1"/>
<dbReference type="InParanoid" id="Q9LDH0"/>
<dbReference type="OMA" id="FIRREDY"/>
<dbReference type="PhylomeDB" id="Q9LDH0"/>
<dbReference type="BioCyc" id="ARA:AT5G55500-MONOMER"/>
<dbReference type="BioCyc" id="MetaCyc:AT5G55500-MONOMER"/>
<dbReference type="BRENDA" id="2.4.2.38">
    <property type="organism ID" value="399"/>
</dbReference>
<dbReference type="UniPathway" id="UPA00378"/>
<dbReference type="PRO" id="PR:Q9LDH0"/>
<dbReference type="Proteomes" id="UP000006548">
    <property type="component" value="Chromosome 5"/>
</dbReference>
<dbReference type="ExpressionAtlas" id="Q9LDH0">
    <property type="expression patterns" value="baseline and differential"/>
</dbReference>
<dbReference type="GO" id="GO:0005794">
    <property type="term" value="C:Golgi apparatus"/>
    <property type="evidence" value="ECO:0007005"/>
    <property type="project" value="TAIR"/>
</dbReference>
<dbReference type="GO" id="GO:0005797">
    <property type="term" value="C:Golgi medial cisterna"/>
    <property type="evidence" value="ECO:0000314"/>
    <property type="project" value="TAIR"/>
</dbReference>
<dbReference type="GO" id="GO:0000139">
    <property type="term" value="C:Golgi membrane"/>
    <property type="evidence" value="ECO:0000314"/>
    <property type="project" value="TAIR"/>
</dbReference>
<dbReference type="GO" id="GO:0000138">
    <property type="term" value="C:Golgi trans cisterna"/>
    <property type="evidence" value="ECO:0007005"/>
    <property type="project" value="TAIR"/>
</dbReference>
<dbReference type="GO" id="GO:0050513">
    <property type="term" value="F:glycoprotein 2-beta-D-xylosyltransferase activity"/>
    <property type="evidence" value="ECO:0000314"/>
    <property type="project" value="UniProtKB"/>
</dbReference>
<dbReference type="GO" id="GO:0042285">
    <property type="term" value="F:xylosyltransferase activity"/>
    <property type="evidence" value="ECO:0000314"/>
    <property type="project" value="TAIR"/>
</dbReference>
<dbReference type="GO" id="GO:0031204">
    <property type="term" value="P:post-translational protein targeting to membrane, translocation"/>
    <property type="evidence" value="ECO:0000314"/>
    <property type="project" value="TAIR"/>
</dbReference>
<dbReference type="GO" id="GO:0006487">
    <property type="term" value="P:protein N-linked glycosylation"/>
    <property type="evidence" value="ECO:0000314"/>
    <property type="project" value="TAIR"/>
</dbReference>
<dbReference type="GO" id="GO:0048367">
    <property type="term" value="P:shoot system development"/>
    <property type="evidence" value="ECO:0007669"/>
    <property type="project" value="EnsemblPlants"/>
</dbReference>
<dbReference type="InterPro" id="IPR049625">
    <property type="entry name" value="Glyco_transf_61_cat"/>
</dbReference>
<dbReference type="InterPro" id="IPR007657">
    <property type="entry name" value="Glycosyltransferase_61"/>
</dbReference>
<dbReference type="PANTHER" id="PTHR48437">
    <property type="entry name" value="INITIATOR BINDING DOMAIN-CONTAINING PROTEIN"/>
    <property type="match status" value="1"/>
</dbReference>
<dbReference type="PANTHER" id="PTHR48437:SF1">
    <property type="entry name" value="INITIATOR BINDING DOMAIN-CONTAINING PROTEIN"/>
    <property type="match status" value="1"/>
</dbReference>
<dbReference type="Pfam" id="PF04577">
    <property type="entry name" value="Glyco_transf_61"/>
    <property type="match status" value="1"/>
</dbReference>
<accession>Q9LDH0</accession>
<accession>Q9LKK7</accession>
<keyword id="KW-0325">Glycoprotein</keyword>
<keyword id="KW-0328">Glycosyltransferase</keyword>
<keyword id="KW-0333">Golgi apparatus</keyword>
<keyword id="KW-0472">Membrane</keyword>
<keyword id="KW-1185">Reference proteome</keyword>
<keyword id="KW-0735">Signal-anchor</keyword>
<keyword id="KW-0808">Transferase</keyword>
<keyword id="KW-0812">Transmembrane</keyword>
<keyword id="KW-1133">Transmembrane helix</keyword>
<evidence type="ECO:0000255" key="1"/>
<evidence type="ECO:0000269" key="2">
    <source>
    </source>
</evidence>
<evidence type="ECO:0000269" key="3">
    <source>
    </source>
</evidence>
<evidence type="ECO:0000269" key="4">
    <source>
    </source>
</evidence>
<evidence type="ECO:0000269" key="5">
    <source>
    </source>
</evidence>
<evidence type="ECO:0000269" key="6">
    <source>
    </source>
</evidence>
<evidence type="ECO:0000269" key="7">
    <source>
    </source>
</evidence>
<evidence type="ECO:0000303" key="8">
    <source>
    </source>
</evidence>
<evidence type="ECO:0000303" key="9">
    <source>
    </source>
</evidence>
<evidence type="ECO:0000305" key="10"/>
<evidence type="ECO:0000305" key="11">
    <source>
    </source>
</evidence>
<evidence type="ECO:0000312" key="12">
    <source>
        <dbReference type="Araport" id="AT5G55500"/>
    </source>
</evidence>
<evidence type="ECO:0000312" key="13">
    <source>
        <dbReference type="EMBL" id="BAB08567.1"/>
    </source>
</evidence>
<reference key="1">
    <citation type="journal article" date="2000" name="FEBS Lett.">
        <title>Molecular cloning and functional expression of beta 1,2-xylosyltransferase cDNA from Arabidopsis thaliana.</title>
        <authorList>
            <person name="Strasser R."/>
            <person name="Mucha J."/>
            <person name="Mach L."/>
            <person name="Altmann F."/>
            <person name="Wilson I.B.H."/>
            <person name="Gloessl J."/>
            <person name="Steinkellner H."/>
        </authorList>
    </citation>
    <scope>NUCLEOTIDE SEQUENCE [MRNA]</scope>
    <scope>FUNCTION</scope>
    <scope>CATALYTIC ACTIVITY</scope>
    <source>
        <strain>cv. Columbia</strain>
    </source>
</reference>
<reference key="2">
    <citation type="submission" date="2000-04" db="EMBL/GenBank/DDBJ databases">
        <title>Arabidopsis cDNA for beta1,2-xylosyltransferase.</title>
        <authorList>
            <person name="Bakker H."/>
        </authorList>
    </citation>
    <scope>NUCLEOTIDE SEQUENCE [MRNA]</scope>
</reference>
<reference key="3">
    <citation type="submission" date="2000-05" db="EMBL/GenBank/DDBJ databases">
        <authorList>
            <person name="Gomord V."/>
            <person name="Baltresca V."/>
            <person name="Kiefer-Meyer M.-C."/>
            <person name="Faye L."/>
        </authorList>
    </citation>
    <scope>NUCLEOTIDE SEQUENCE [MRNA]</scope>
    <source>
        <strain>cv. Wassilewskija</strain>
    </source>
</reference>
<reference key="4">
    <citation type="journal article" date="1998" name="DNA Res.">
        <title>Structural analysis of Arabidopsis thaliana chromosome 5. VII. Sequence features of the regions of 1,013,767 bp covered by sixteen physically assigned P1 and TAC clones.</title>
        <authorList>
            <person name="Nakamura Y."/>
            <person name="Sato S."/>
            <person name="Asamizu E."/>
            <person name="Kaneko T."/>
            <person name="Kotani H."/>
            <person name="Miyajima N."/>
            <person name="Tabata S."/>
        </authorList>
    </citation>
    <scope>NUCLEOTIDE SEQUENCE [LARGE SCALE GENOMIC DNA]</scope>
    <source>
        <strain>cv. Columbia</strain>
    </source>
</reference>
<reference key="5">
    <citation type="journal article" date="2017" name="Plant J.">
        <title>Araport11: a complete reannotation of the Arabidopsis thaliana reference genome.</title>
        <authorList>
            <person name="Cheng C.Y."/>
            <person name="Krishnakumar V."/>
            <person name="Chan A.P."/>
            <person name="Thibaud-Nissen F."/>
            <person name="Schobel S."/>
            <person name="Town C.D."/>
        </authorList>
    </citation>
    <scope>GENOME REANNOTATION</scope>
    <source>
        <strain>cv. Columbia</strain>
    </source>
</reference>
<reference key="6">
    <citation type="journal article" date="2003" name="Science">
        <title>Empirical analysis of transcriptional activity in the Arabidopsis genome.</title>
        <authorList>
            <person name="Yamada K."/>
            <person name="Lim J."/>
            <person name="Dale J.M."/>
            <person name="Chen H."/>
            <person name="Shinn P."/>
            <person name="Palm C.J."/>
            <person name="Southwick A.M."/>
            <person name="Wu H.C."/>
            <person name="Kim C.J."/>
            <person name="Nguyen M."/>
            <person name="Pham P.K."/>
            <person name="Cheuk R.F."/>
            <person name="Karlin-Newmann G."/>
            <person name="Liu S.X."/>
            <person name="Lam B."/>
            <person name="Sakano H."/>
            <person name="Wu T."/>
            <person name="Yu G."/>
            <person name="Miranda M."/>
            <person name="Quach H.L."/>
            <person name="Tripp M."/>
            <person name="Chang C.H."/>
            <person name="Lee J.M."/>
            <person name="Toriumi M.J."/>
            <person name="Chan M.M."/>
            <person name="Tang C.C."/>
            <person name="Onodera C.S."/>
            <person name="Deng J.M."/>
            <person name="Akiyama K."/>
            <person name="Ansari Y."/>
            <person name="Arakawa T."/>
            <person name="Banh J."/>
            <person name="Banno F."/>
            <person name="Bowser L."/>
            <person name="Brooks S.Y."/>
            <person name="Carninci P."/>
            <person name="Chao Q."/>
            <person name="Choy N."/>
            <person name="Enju A."/>
            <person name="Goldsmith A.D."/>
            <person name="Gurjal M."/>
            <person name="Hansen N.F."/>
            <person name="Hayashizaki Y."/>
            <person name="Johnson-Hopson C."/>
            <person name="Hsuan V.W."/>
            <person name="Iida K."/>
            <person name="Karnes M."/>
            <person name="Khan S."/>
            <person name="Koesema E."/>
            <person name="Ishida J."/>
            <person name="Jiang P.X."/>
            <person name="Jones T."/>
            <person name="Kawai J."/>
            <person name="Kamiya A."/>
            <person name="Meyers C."/>
            <person name="Nakajima M."/>
            <person name="Narusaka M."/>
            <person name="Seki M."/>
            <person name="Sakurai T."/>
            <person name="Satou M."/>
            <person name="Tamse R."/>
            <person name="Vaysberg M."/>
            <person name="Wallender E.K."/>
            <person name="Wong C."/>
            <person name="Yamamura Y."/>
            <person name="Yuan S."/>
            <person name="Shinozaki K."/>
            <person name="Davis R.W."/>
            <person name="Theologis A."/>
            <person name="Ecker J.R."/>
        </authorList>
    </citation>
    <scope>NUCLEOTIDE SEQUENCE [LARGE SCALE MRNA]</scope>
    <source>
        <strain>cv. Columbia</strain>
    </source>
</reference>
<reference key="7">
    <citation type="journal article" date="2002" name="Plant Mol. Biol.">
        <title>The Golgi localization of Arabidopsis thaliana beta1,2-xylosyltransferase in plant cells is dependent on its cytoplasmic and transmembrane sequences.</title>
        <authorList>
            <person name="Dirnberger D."/>
            <person name="Bencur P."/>
            <person name="Mach L."/>
            <person name="Steinkellner H."/>
        </authorList>
    </citation>
    <scope>SUBCELLULAR LOCATION</scope>
</reference>
<reference key="8">
    <citation type="journal article" date="2003" name="Plant J.">
        <title>Structural requirements for Arabidopsis beta1,2-xylosyltransferase activity and targeting to the Golgi.</title>
        <authorList>
            <person name="Pagny S."/>
            <person name="Bouissonnie F."/>
            <person name="Sarkar M."/>
            <person name="Follet-Gueye M.L."/>
            <person name="Driouich A."/>
            <person name="Schachter H."/>
            <person name="Faye L."/>
            <person name="Gomord V."/>
        </authorList>
    </citation>
    <scope>FUNCTION</scope>
    <scope>SUBCELLULAR LOCATION</scope>
    <scope>GLYCOSYLATION AT ASN-51 AND ASN-301</scope>
    <scope>MUTAGENESIS OF SER-53 AND THR-303</scope>
</reference>
<reference key="9">
    <citation type="journal article" date="2004" name="FEBS Lett.">
        <title>Generation of Arabidopsis thaliana plants with complex N-glycans lacking beta1,2-linked xylose and core alpha1,3-linked fucose.</title>
        <authorList>
            <person name="Strasser R."/>
            <person name="Altmann F."/>
            <person name="Mach L."/>
            <person name="Gloessl J."/>
            <person name="Steinkellner H."/>
        </authorList>
    </citation>
    <scope>FUNCTION</scope>
</reference>
<reference key="10">
    <citation type="journal article" date="2005" name="Biochem. J.">
        <title>Arabidopsis thaliana beta1,2-xylosyltransferase: an unusual glycosyltransferase with the potential to act at multiple stages of the plant N-glycosylation pathway.</title>
        <authorList>
            <person name="Bencur P."/>
            <person name="Steinkellner H."/>
            <person name="Svoboda B."/>
            <person name="Mucha J."/>
            <person name="Strasser R."/>
            <person name="Kolarich D."/>
            <person name="Hann S."/>
            <person name="Koellensperger G."/>
            <person name="Gloessl J."/>
            <person name="Altmann F."/>
            <person name="Mach L."/>
        </authorList>
    </citation>
    <scope>FUNCTION</scope>
    <scope>GLYCOSYLATION AT ASN-51; ASN-301 AND ASN-479</scope>
</reference>
<reference key="11">
    <citation type="journal article" date="2012" name="J. Biosci. Bioeng.">
        <title>Arabidopsis beta1,2-xylosyltransferase: substrate specificity and participation in the plant-specific N-glycosylation pathway.</title>
        <authorList>
            <person name="Kajiura H."/>
            <person name="Okamoto T."/>
            <person name="Misaki R."/>
            <person name="Matsuura Y."/>
            <person name="Fujiyama K."/>
        </authorList>
    </citation>
    <scope>FUNCTION</scope>
    <scope>CATALYTIC ACTIVITY</scope>
</reference>
<organism>
    <name type="scientific">Arabidopsis thaliana</name>
    <name type="common">Mouse-ear cress</name>
    <dbReference type="NCBI Taxonomy" id="3702"/>
    <lineage>
        <taxon>Eukaryota</taxon>
        <taxon>Viridiplantae</taxon>
        <taxon>Streptophyta</taxon>
        <taxon>Embryophyta</taxon>
        <taxon>Tracheophyta</taxon>
        <taxon>Spermatophyta</taxon>
        <taxon>Magnoliopsida</taxon>
        <taxon>eudicotyledons</taxon>
        <taxon>Gunneridae</taxon>
        <taxon>Pentapetalae</taxon>
        <taxon>rosids</taxon>
        <taxon>malvids</taxon>
        <taxon>Brassicales</taxon>
        <taxon>Brassicaceae</taxon>
        <taxon>Camelineae</taxon>
        <taxon>Arabidopsis</taxon>
    </lineage>
</organism>
<sequence length="534" mass="60235">MSKRNPKILKIFLYMLLLNSLFLIIYFVFHSSSFSPEQSQPPHIYHVSVNNQSAIQKPWPILPSYLPWTPPQRNLPTGSCEGYFGNGFTKRVDFLKPRIGGGGEGSWFRCFYSETLQSSICEGRNLRMVPDRIVMSRGGEKLEEVMGRKEEEELPAFRQGAFEVAEEVSSRLGFKRHRRFGGGEGGSAVSRRLVNDEMLNEYMQEGGIDRHTMRDLVASIRAVDTNDFVCEEWVEEPTLLVTRFEYANLFHTVTDWYSAYVSSRVTGLPNRPHVVFVDGHCTTQLEETWTALFSGIRYAKNFTKPVCFRHAILSPLGYETALFKGLSGEIDCKGDSAHNLWQNPDDKRTARISEFGEMIRAAFGLPVNRHRSLEKPLSSSSSSASVYNVLFVRREDYLAHPRHGGKVQSRLINEEEVFDSLHHWVATGSTGLTKCGINLVNGLLAHMSMKDQVRAIQDASVIIGAHGAGLTHIVSATPNTTIFEIISVEFQRPHFELIAKWKGLEYHAMHLANSRAEPTAVIEKLTEIMKSLGC</sequence>
<comment type="function">
    <text evidence="2 4 5 6 7">Glycosyltransferase involved in the xylosylation of N-glycans (PubMed:10781814, PubMed:12943552, PubMed:15013764, PubMed:15686448). Possesses beta-1,2-xylosyltransferase activity, transferring xylose from UDP-xylose to the core beta-linked mannose of N-glycans (PubMed:10781814, PubMed:12943552, PubMed:15013764, PubMed:15686448). Involved in the biosynthesis of glycoprotein bound N-glycans (PubMed:15686448, PubMed:22024534). Does not require metal ions for its activity (PubMed:15686448).</text>
</comment>
<comment type="catalytic activity">
    <reaction evidence="2 7">
        <text>N(4)-{beta-D-GlcNAc-(1-&gt;2)-alpha-D-Man-(1-&gt;3)-[beta-D-GlcNAc-(1-&gt;2)-alpha-D-Man-(1-&gt;6)]-beta-D-Man-(1-&gt;4)-beta-D-GlcNAc-(1-&gt;4)-beta-D-GlcNAc}-L-asparaginyl-[protein] + UDP-alpha-D-xylose = N(4)-{beta-D-GlcNAc-(1-&gt;2)-alpha-D-Man-(1-&gt;3)-[beta-D-GlcNAc-(1-&gt;2)-alpha-D-Man-(1-&gt;6)]-[beta-D-Xyl-(1-&gt;2)]-beta-D-Man-(1-&gt;4)-beta-D-GlcNAc-(1-&gt;4)-beta-D-GlcNAc}-L-asparaginyl-[protein] + UDP + H(+)</text>
        <dbReference type="Rhea" id="RHEA:10612"/>
        <dbReference type="Rhea" id="RHEA-COMP:13526"/>
        <dbReference type="Rhea" id="RHEA-COMP:13530"/>
        <dbReference type="ChEBI" id="CHEBI:15378"/>
        <dbReference type="ChEBI" id="CHEBI:57632"/>
        <dbReference type="ChEBI" id="CHEBI:58223"/>
        <dbReference type="ChEBI" id="CHEBI:60651"/>
        <dbReference type="ChEBI" id="CHEBI:137186"/>
        <dbReference type="EC" id="2.4.2.38"/>
    </reaction>
</comment>
<comment type="pathway">
    <text evidence="10">Protein modification; protein glycosylation.</text>
</comment>
<comment type="subcellular location">
    <subcellularLocation>
        <location evidence="3 4">Golgi apparatus membrane</location>
        <topology evidence="3 4">Single-pass type II membrane protein</topology>
    </subcellularLocation>
    <text evidence="4">Localizes in medial cisternae of Golgi apparatus.</text>
</comment>
<comment type="PTM">
    <text evidence="4">Glycosylation at least at one of the two sites Asn-51 and Asn-301 is necessary for enzyme stability and activity.</text>
</comment>
<comment type="miscellaneous">
    <text evidence="11">Renders plant glycoproteins immunogenic and allergenic in human. This is due to the presence of beta-1,2-xylose and/or core alpha-1,3-fucose which are not found in mammalian proteins, and which constitute epitopes for carbohydrate-reactive antibodies.</text>
</comment>
<gene>
    <name evidence="8" type="primary">XYLT</name>
    <name evidence="12" type="ordered locus">At5g55500</name>
    <name evidence="13" type="ORF">MTE17.21</name>
</gene>